<dbReference type="EC" id="2.4.1.69" evidence="7 8"/>
<dbReference type="EC" id="2.4.1.344" evidence="7 8"/>
<dbReference type="EMBL" id="U70881">
    <property type="protein sequence ID" value="AAB81883.1"/>
    <property type="molecule type" value="Genomic_DNA"/>
</dbReference>
<dbReference type="EMBL" id="AF027304">
    <property type="protein sequence ID" value="AAC09170.1"/>
    <property type="molecule type" value="Genomic_DNA"/>
</dbReference>
<dbReference type="EMBL" id="AF136895">
    <property type="protein sequence ID" value="AAF59832.1"/>
    <property type="molecule type" value="mRNA"/>
</dbReference>
<dbReference type="EMBL" id="X99621">
    <property type="protein sequence ID" value="CAA67932.1"/>
    <property type="molecule type" value="Genomic_DNA"/>
</dbReference>
<dbReference type="RefSeq" id="NP_999234.1">
    <property type="nucleotide sequence ID" value="NM_214069.1"/>
</dbReference>
<dbReference type="FunCoup" id="Q10982">
    <property type="interactions" value="101"/>
</dbReference>
<dbReference type="STRING" id="9823.ENSSSCP00000003406"/>
<dbReference type="CAZy" id="GT11">
    <property type="family name" value="Glycosyltransferase Family 11"/>
</dbReference>
<dbReference type="GlyCosmos" id="Q10982">
    <property type="glycosylation" value="4 sites, No reported glycans"/>
</dbReference>
<dbReference type="GlyGen" id="Q10982">
    <property type="glycosylation" value="4 sites"/>
</dbReference>
<dbReference type="PaxDb" id="9823-ENSSSCP00000003406"/>
<dbReference type="Ensembl" id="ENSSSCT00000003489.3">
    <property type="protein sequence ID" value="ENSSSCP00000003406.1"/>
    <property type="gene ID" value="ENSSSCG00000003145.3"/>
</dbReference>
<dbReference type="Ensembl" id="ENSSSCT00015038280.1">
    <property type="protein sequence ID" value="ENSSSCP00015015187.1"/>
    <property type="gene ID" value="ENSSSCG00015028901.1"/>
</dbReference>
<dbReference type="Ensembl" id="ENSSSCT00015038335.1">
    <property type="protein sequence ID" value="ENSSSCP00015015215.1"/>
    <property type="gene ID" value="ENSSSCG00015028901.1"/>
</dbReference>
<dbReference type="Ensembl" id="ENSSSCT00030072738.1">
    <property type="protein sequence ID" value="ENSSSCP00030033192.1"/>
    <property type="gene ID" value="ENSSSCG00030052217.1"/>
</dbReference>
<dbReference type="Ensembl" id="ENSSSCT00035062272.1">
    <property type="protein sequence ID" value="ENSSSCP00035025143.1"/>
    <property type="gene ID" value="ENSSSCG00035046820.1"/>
</dbReference>
<dbReference type="Ensembl" id="ENSSSCT00040007308.1">
    <property type="protein sequence ID" value="ENSSSCP00040002891.1"/>
    <property type="gene ID" value="ENSSSCG00040005533.1"/>
</dbReference>
<dbReference type="Ensembl" id="ENSSSCT00045027680.1">
    <property type="protein sequence ID" value="ENSSSCP00045019150.1"/>
    <property type="gene ID" value="ENSSSCG00045016268.1"/>
</dbReference>
<dbReference type="Ensembl" id="ENSSSCT00055057143.1">
    <property type="protein sequence ID" value="ENSSSCP00055045711.1"/>
    <property type="gene ID" value="ENSSSCG00055028807.1"/>
</dbReference>
<dbReference type="Ensembl" id="ENSSSCT00065061497.1">
    <property type="protein sequence ID" value="ENSSSCP00065026650.1"/>
    <property type="gene ID" value="ENSSSCG00065044954.1"/>
</dbReference>
<dbReference type="Ensembl" id="ENSSSCT00070055875.1">
    <property type="protein sequence ID" value="ENSSSCP00070047466.1"/>
    <property type="gene ID" value="ENSSSCG00070027851.1"/>
</dbReference>
<dbReference type="Ensembl" id="ENSSSCT00105072225">
    <property type="protein sequence ID" value="ENSSSCP00105051173"/>
    <property type="gene ID" value="ENSSSCG00105037852"/>
</dbReference>
<dbReference type="Ensembl" id="ENSSSCT00105072229">
    <property type="protein sequence ID" value="ENSSSCP00105051175"/>
    <property type="gene ID" value="ENSSSCG00105037852"/>
</dbReference>
<dbReference type="Ensembl" id="ENSSSCT00110061631">
    <property type="protein sequence ID" value="ENSSSCP00110043182"/>
    <property type="gene ID" value="ENSSSCG00110032272"/>
</dbReference>
<dbReference type="Ensembl" id="ENSSSCT00110061637">
    <property type="protein sequence ID" value="ENSSSCP00110043185"/>
    <property type="gene ID" value="ENSSSCG00110032272"/>
</dbReference>
<dbReference type="Ensembl" id="ENSSSCT00115014042">
    <property type="protein sequence ID" value="ENSSSCP00115013256"/>
    <property type="gene ID" value="ENSSSCG00115008055"/>
</dbReference>
<dbReference type="Ensembl" id="ENSSSCT00130069341">
    <property type="protein sequence ID" value="ENSSSCP00130049873"/>
    <property type="gene ID" value="ENSSSCG00130035471"/>
</dbReference>
<dbReference type="Ensembl" id="ENSSSCT00130069347">
    <property type="protein sequence ID" value="ENSSSCP00130049878"/>
    <property type="gene ID" value="ENSSSCG00130035471"/>
</dbReference>
<dbReference type="GeneID" id="397139"/>
<dbReference type="KEGG" id="ssc:397139"/>
<dbReference type="CTD" id="2524"/>
<dbReference type="eggNOG" id="ENOG502S316">
    <property type="taxonomic scope" value="Eukaryota"/>
</dbReference>
<dbReference type="GeneTree" id="ENSGT00390000001450"/>
<dbReference type="HOGENOM" id="CLU_043399_0_1_1"/>
<dbReference type="InParanoid" id="Q10982"/>
<dbReference type="OMA" id="KGMWTIN"/>
<dbReference type="TreeFam" id="TF315810"/>
<dbReference type="BRENDA" id="2.4.1.344">
    <property type="organism ID" value="6170"/>
</dbReference>
<dbReference type="BRENDA" id="2.4.1.69">
    <property type="organism ID" value="6170"/>
</dbReference>
<dbReference type="Reactome" id="R-SSC-9033807">
    <property type="pathway name" value="ABO blood group biosynthesis"/>
</dbReference>
<dbReference type="Reactome" id="R-SSC-9037629">
    <property type="pathway name" value="Lewis blood group biosynthesis"/>
</dbReference>
<dbReference type="Reactome" id="R-SSC-9840309">
    <property type="pathway name" value="Glycosphingolipid biosynthesis"/>
</dbReference>
<dbReference type="SABIO-RK" id="Q10982"/>
<dbReference type="UniPathway" id="UPA00378"/>
<dbReference type="Proteomes" id="UP000008227">
    <property type="component" value="Chromosome 6"/>
</dbReference>
<dbReference type="Proteomes" id="UP000314985">
    <property type="component" value="Chromosome 6"/>
</dbReference>
<dbReference type="Proteomes" id="UP000694570">
    <property type="component" value="Unplaced"/>
</dbReference>
<dbReference type="Proteomes" id="UP000694571">
    <property type="component" value="Unplaced"/>
</dbReference>
<dbReference type="Proteomes" id="UP000694720">
    <property type="component" value="Unplaced"/>
</dbReference>
<dbReference type="Proteomes" id="UP000694722">
    <property type="component" value="Unplaced"/>
</dbReference>
<dbReference type="Proteomes" id="UP000694723">
    <property type="component" value="Unplaced"/>
</dbReference>
<dbReference type="Proteomes" id="UP000694724">
    <property type="component" value="Unplaced"/>
</dbReference>
<dbReference type="Proteomes" id="UP000694725">
    <property type="component" value="Unplaced"/>
</dbReference>
<dbReference type="Proteomes" id="UP000694726">
    <property type="component" value="Unplaced"/>
</dbReference>
<dbReference type="Proteomes" id="UP000694727">
    <property type="component" value="Unplaced"/>
</dbReference>
<dbReference type="Proteomes" id="UP000694728">
    <property type="component" value="Unplaced"/>
</dbReference>
<dbReference type="Bgee" id="ENSSSCG00000003145">
    <property type="expression patterns" value="Expressed in uterus and 32 other cell types or tissues"/>
</dbReference>
<dbReference type="GO" id="GO:0032580">
    <property type="term" value="C:Golgi cisterna membrane"/>
    <property type="evidence" value="ECO:0007669"/>
    <property type="project" value="UniProtKB-SubCell"/>
</dbReference>
<dbReference type="GO" id="GO:0031127">
    <property type="term" value="F:alpha-(1,2)-fucosyltransferase activity"/>
    <property type="evidence" value="ECO:0000250"/>
    <property type="project" value="UniProtKB"/>
</dbReference>
<dbReference type="GO" id="GO:0008107">
    <property type="term" value="F:galactoside 2-alpha-L-fucosyltransferase activity"/>
    <property type="evidence" value="ECO:0000318"/>
    <property type="project" value="GO_Central"/>
</dbReference>
<dbReference type="GO" id="GO:0036065">
    <property type="term" value="P:fucosylation"/>
    <property type="evidence" value="ECO:0000250"/>
    <property type="project" value="UniProtKB"/>
</dbReference>
<dbReference type="GO" id="GO:0006664">
    <property type="term" value="P:glycolipid metabolic process"/>
    <property type="evidence" value="ECO:0000250"/>
    <property type="project" value="UniProtKB"/>
</dbReference>
<dbReference type="GO" id="GO:0009312">
    <property type="term" value="P:oligosaccharide biosynthetic process"/>
    <property type="evidence" value="ECO:0007669"/>
    <property type="project" value="Ensembl"/>
</dbReference>
<dbReference type="GO" id="GO:0006486">
    <property type="term" value="P:protein glycosylation"/>
    <property type="evidence" value="ECO:0000318"/>
    <property type="project" value="GO_Central"/>
</dbReference>
<dbReference type="GO" id="GO:0030155">
    <property type="term" value="P:regulation of cell adhesion"/>
    <property type="evidence" value="ECO:0000250"/>
    <property type="project" value="UniProtKB"/>
</dbReference>
<dbReference type="GO" id="GO:0001936">
    <property type="term" value="P:regulation of endothelial cell proliferation"/>
    <property type="evidence" value="ECO:0000250"/>
    <property type="project" value="UniProtKB"/>
</dbReference>
<dbReference type="CDD" id="cd11301">
    <property type="entry name" value="Fut1_Fut2_like"/>
    <property type="match status" value="1"/>
</dbReference>
<dbReference type="InterPro" id="IPR002516">
    <property type="entry name" value="Glyco_trans_11"/>
</dbReference>
<dbReference type="PANTHER" id="PTHR11927">
    <property type="entry name" value="GALACTOSIDE 2-L-FUCOSYLTRANSFERASE"/>
    <property type="match status" value="1"/>
</dbReference>
<dbReference type="PANTHER" id="PTHR11927:SF2">
    <property type="entry name" value="GALACTOSIDE ALPHA-(1,2)-FUCOSYLTRANSFERASE 2"/>
    <property type="match status" value="1"/>
</dbReference>
<dbReference type="Pfam" id="PF01531">
    <property type="entry name" value="Glyco_transf_11"/>
    <property type="match status" value="1"/>
</dbReference>
<organism>
    <name type="scientific">Sus scrofa</name>
    <name type="common">Pig</name>
    <dbReference type="NCBI Taxonomy" id="9823"/>
    <lineage>
        <taxon>Eukaryota</taxon>
        <taxon>Metazoa</taxon>
        <taxon>Chordata</taxon>
        <taxon>Craniata</taxon>
        <taxon>Vertebrata</taxon>
        <taxon>Euteleostomi</taxon>
        <taxon>Mammalia</taxon>
        <taxon>Eutheria</taxon>
        <taxon>Laurasiatheria</taxon>
        <taxon>Artiodactyla</taxon>
        <taxon>Suina</taxon>
        <taxon>Suidae</taxon>
        <taxon>Sus</taxon>
    </lineage>
</organism>
<accession>Q10982</accession>
<accession>O19100</accession>
<accession>Q29044</accession>
<comment type="function">
    <text evidence="5 7 8">Catalyzes the transfer of L-fucose, from a guanosine diphosphate-beta-L-fucose, to the terminal galactose on both O- and N-linked glycans chains of cell surface glycoproteins and glycolipids and the resulting epitope regulates several processes such as cell-cell interaction including host-microbe interaction, cell surface expression and cell proliferation (PubMed:11132149, PubMed:7592879). Preferentially fucosylates gangliosides GA1 and GM1 in the antrum, cecum and colon and in the female reproductive organs. Fucosylated host glycoproteins or glycolipids mediate interaction with intestinal microbiota influencing its composition. Creates a soluble precursor oligosaccharide FuC-alpha ((1,2)Galbeta-) called the H antigen which is an essential substrate for the final step in the soluble ABO blood group antigen synthesis pathway (By similarity).</text>
</comment>
<comment type="catalytic activity">
    <reaction evidence="7 8">
        <text>a beta-D-galactosyl-(1-&gt;3)-N-acetyl-beta-D-glucosaminyl derivative + GDP-beta-L-fucose = an alpha-L-Fuc-(1-&gt;2)-beta-D-Gal-(1-&gt;3)-beta-D-GlcNAc derivative + GDP + H(+)</text>
        <dbReference type="Rhea" id="RHEA:50664"/>
        <dbReference type="ChEBI" id="CHEBI:15378"/>
        <dbReference type="ChEBI" id="CHEBI:57273"/>
        <dbReference type="ChEBI" id="CHEBI:58189"/>
        <dbReference type="ChEBI" id="CHEBI:133506"/>
        <dbReference type="ChEBI" id="CHEBI:133509"/>
        <dbReference type="EC" id="2.4.1.69"/>
    </reaction>
    <physiologicalReaction direction="left-to-right" evidence="10 11">
        <dbReference type="Rhea" id="RHEA:50665"/>
    </physiologicalReaction>
</comment>
<comment type="catalytic activity">
    <reaction evidence="7 8">
        <text>a beta-D-galactosyl-(1-&gt;4)-N-acetyl-beta-D-glucosaminyl derivative + GDP-beta-L-fucose = an alpha-L-Fuc-(1-&gt;2)-beta-D-Gal-(1-&gt;4)-beta-D-GlcNAc derivative + GDP + H(+)</text>
        <dbReference type="Rhea" id="RHEA:50668"/>
        <dbReference type="ChEBI" id="CHEBI:15378"/>
        <dbReference type="ChEBI" id="CHEBI:57273"/>
        <dbReference type="ChEBI" id="CHEBI:58189"/>
        <dbReference type="ChEBI" id="CHEBI:133507"/>
        <dbReference type="ChEBI" id="CHEBI:133510"/>
        <dbReference type="EC" id="2.4.1.344"/>
    </reaction>
    <physiologicalReaction direction="left-to-right" evidence="10 11">
        <dbReference type="Rhea" id="RHEA:50669"/>
    </physiologicalReaction>
</comment>
<comment type="catalytic activity">
    <reaction evidence="5">
        <text>a neolactoside nLc4Cer + GDP-beta-L-fucose = a neolactoside IV(2)-alpha-Fuc-nLc4Cer + GDP + H(+)</text>
        <dbReference type="Rhea" id="RHEA:48800"/>
        <dbReference type="ChEBI" id="CHEBI:15378"/>
        <dbReference type="ChEBI" id="CHEBI:57273"/>
        <dbReference type="ChEBI" id="CHEBI:58189"/>
        <dbReference type="ChEBI" id="CHEBI:90376"/>
        <dbReference type="ChEBI" id="CHEBI:90803"/>
    </reaction>
    <physiologicalReaction direction="left-to-right" evidence="5">
        <dbReference type="Rhea" id="RHEA:48801"/>
    </physiologicalReaction>
</comment>
<comment type="catalytic activity">
    <reaction evidence="5">
        <text>a neolactoside nLc4Cer(d18:1(4E)) + GDP-beta-L-fucose = a neolactoside IV(2)-alpha-Fuc-nLc4Cer(d18:1(4E)) + GDP + H(+)</text>
        <dbReference type="Rhea" id="RHEA:48304"/>
        <dbReference type="ChEBI" id="CHEBI:15378"/>
        <dbReference type="ChEBI" id="CHEBI:17006"/>
        <dbReference type="ChEBI" id="CHEBI:28691"/>
        <dbReference type="ChEBI" id="CHEBI:57273"/>
        <dbReference type="ChEBI" id="CHEBI:58189"/>
    </reaction>
    <physiologicalReaction direction="left-to-right" evidence="5">
        <dbReference type="Rhea" id="RHEA:48305"/>
    </physiologicalReaction>
</comment>
<comment type="catalytic activity">
    <reaction evidence="5">
        <text>a ganglioside GM1 + GDP-beta-L-fucose = a ganglioside Fuc-GM1 + GDP + H(+)</text>
        <dbReference type="Rhea" id="RHEA:48292"/>
        <dbReference type="ChEBI" id="CHEBI:15378"/>
        <dbReference type="ChEBI" id="CHEBI:57273"/>
        <dbReference type="ChEBI" id="CHEBI:58189"/>
        <dbReference type="ChEBI" id="CHEBI:82639"/>
        <dbReference type="ChEBI" id="CHEBI:90189"/>
    </reaction>
    <physiologicalReaction direction="left-to-right" evidence="5">
        <dbReference type="Rhea" id="RHEA:48293"/>
    </physiologicalReaction>
</comment>
<comment type="catalytic activity">
    <reaction evidence="5">
        <text>a ganglioside GA1 + GDP-beta-L-fucose = a ganglioside Fuc-GA1 + GDP + H(+)</text>
        <dbReference type="Rhea" id="RHEA:48320"/>
        <dbReference type="ChEBI" id="CHEBI:15378"/>
        <dbReference type="ChEBI" id="CHEBI:57273"/>
        <dbReference type="ChEBI" id="CHEBI:58189"/>
        <dbReference type="ChEBI" id="CHEBI:88069"/>
        <dbReference type="ChEBI" id="CHEBI:90262"/>
    </reaction>
    <physiologicalReaction direction="left-to-right" evidence="5">
        <dbReference type="Rhea" id="RHEA:48321"/>
    </physiologicalReaction>
</comment>
<comment type="catalytic activity">
    <reaction evidence="5">
        <text>Lc4Cer + GDP-beta-L-fucose = alpha-L-fucosyl-(1-&gt;2)-beta-D-galactosyl-(1-&gt;3)-N-acetyl-beta-D-glucosaminyl-(1-&gt;3)-beta-D-galactosyl-(1-&gt;4)-beta-D-glucosyl-(1&lt;-&gt;1')-ceramide + GDP + H(+)</text>
        <dbReference type="Rhea" id="RHEA:48792"/>
        <dbReference type="ChEBI" id="CHEBI:15378"/>
        <dbReference type="ChEBI" id="CHEBI:57273"/>
        <dbReference type="ChEBI" id="CHEBI:58189"/>
        <dbReference type="ChEBI" id="CHEBI:90800"/>
        <dbReference type="ChEBI" id="CHEBI:90802"/>
    </reaction>
    <physiologicalReaction direction="left-to-right" evidence="5">
        <dbReference type="Rhea" id="RHEA:48793"/>
    </physiologicalReaction>
</comment>
<comment type="catalytic activity">
    <reaction evidence="5">
        <text>a beta-D-Gal-(1-&gt;3)-beta-D-GlcNAc-(1-&gt;3)-beta-D-Gal-(1-&gt;4)-beta-D-Glc-(1&lt;-&gt;1')-Cer(d18:1(4E)) + GDP-beta-L-fucose = alpha-L-fucosyl-(1-&gt;2)- beta-D-galactosyl-(1-&gt;3)-N-acetyl-beta-D-glucosaminyl-(1-&gt;3)-beta-D-galactosyl-(1-&gt;4)-beta-D-glucosyl-(1&lt;-&gt;1')-N-acylsphing-4-enine + GDP + H(+)</text>
        <dbReference type="Rhea" id="RHEA:32175"/>
        <dbReference type="ChEBI" id="CHEBI:15378"/>
        <dbReference type="ChEBI" id="CHEBI:17292"/>
        <dbReference type="ChEBI" id="CHEBI:28743"/>
        <dbReference type="ChEBI" id="CHEBI:57273"/>
        <dbReference type="ChEBI" id="CHEBI:58189"/>
        <dbReference type="EC" id="2.4.1.69"/>
    </reaction>
    <physiologicalReaction direction="left-to-right" evidence="5">
        <dbReference type="Rhea" id="RHEA:32176"/>
    </physiologicalReaction>
</comment>
<comment type="catalytic activity">
    <reaction evidence="5">
        <text>a ganglioside GD1b + GDP-beta-L-fucose = a ganglioside Fuc-GD1b + GDP + H(+)</text>
        <dbReference type="Rhea" id="RHEA:48324"/>
        <dbReference type="ChEBI" id="CHEBI:15378"/>
        <dbReference type="ChEBI" id="CHEBI:57273"/>
        <dbReference type="ChEBI" id="CHEBI:58189"/>
        <dbReference type="ChEBI" id="CHEBI:82939"/>
        <dbReference type="ChEBI" id="CHEBI:90265"/>
    </reaction>
    <physiologicalReaction direction="left-to-right" evidence="5">
        <dbReference type="Rhea" id="RHEA:48325"/>
    </physiologicalReaction>
</comment>
<comment type="catalytic activity">
    <reaction evidence="3">
        <text>a ganglioside GM1 (d18:1(4E)) + GDP-beta-L-fucose = a ganglioside Fuc-GM1 (d18:1(4E)) + GDP + H(+)</text>
        <dbReference type="Rhea" id="RHEA:42040"/>
        <dbReference type="ChEBI" id="CHEBI:15378"/>
        <dbReference type="ChEBI" id="CHEBI:57273"/>
        <dbReference type="ChEBI" id="CHEBI:58189"/>
        <dbReference type="ChEBI" id="CHEBI:77709"/>
        <dbReference type="ChEBI" id="CHEBI:78607"/>
    </reaction>
    <physiologicalReaction direction="left-to-right" evidence="3">
        <dbReference type="Rhea" id="RHEA:42041"/>
    </physiologicalReaction>
</comment>
<comment type="catalytic activity">
    <reaction evidence="3">
        <text>a globoside GalGb4Cer (d18:1(4E)) + GDP-beta-L-fucose = a globoside Globo-H (d18:1(4E)) + GDP + H(+)</text>
        <dbReference type="Rhea" id="RHEA:42044"/>
        <dbReference type="ChEBI" id="CHEBI:15378"/>
        <dbReference type="ChEBI" id="CHEBI:57273"/>
        <dbReference type="ChEBI" id="CHEBI:58189"/>
        <dbReference type="ChEBI" id="CHEBI:62571"/>
        <dbReference type="ChEBI" id="CHEBI:62649"/>
    </reaction>
    <physiologicalReaction direction="left-to-right" evidence="3">
        <dbReference type="Rhea" id="RHEA:42045"/>
    </physiologicalReaction>
</comment>
<comment type="catalytic activity">
    <reaction evidence="5">
        <text>a lactoside III(4)-a-Fuc-Lc4Cer + GDP-beta-L-fucose = a lactoside IV(2),III(4)-a-[Fuc]2-Lc4Cer + GDP + H(+)</text>
        <dbReference type="Rhea" id="RHEA:62616"/>
        <dbReference type="ChEBI" id="CHEBI:15378"/>
        <dbReference type="ChEBI" id="CHEBI:57273"/>
        <dbReference type="ChEBI" id="CHEBI:58189"/>
        <dbReference type="ChEBI" id="CHEBI:90811"/>
        <dbReference type="ChEBI" id="CHEBI:142612"/>
    </reaction>
    <physiologicalReaction direction="left-to-right" evidence="5">
        <dbReference type="Rhea" id="RHEA:62617"/>
    </physiologicalReaction>
</comment>
<comment type="catalytic activity">
    <reaction evidence="4">
        <text>beta-D-galactosyl-(1-&gt;3)-N-acetyl-D-galactosamine + GDP-beta-L-fucose = alpha-L-fucosyl-(1-&gt;2)-beta-D-galactosyl-(1-&gt;3)-N-acetyl-D-galactosamine + GDP + H(+)</text>
        <dbReference type="Rhea" id="RHEA:62964"/>
        <dbReference type="ChEBI" id="CHEBI:15378"/>
        <dbReference type="ChEBI" id="CHEBI:57273"/>
        <dbReference type="ChEBI" id="CHEBI:58189"/>
        <dbReference type="ChEBI" id="CHEBI:84728"/>
        <dbReference type="ChEBI" id="CHEBI:546807"/>
    </reaction>
    <physiologicalReaction direction="left-to-right" evidence="4">
        <dbReference type="Rhea" id="RHEA:62965"/>
    </physiologicalReaction>
</comment>
<comment type="pathway">
    <text evidence="7 8">Protein modification; protein glycosylation.</text>
</comment>
<comment type="subcellular location">
    <subcellularLocation>
        <location evidence="1">Golgi apparatus</location>
        <location evidence="1">Golgi stack membrane</location>
        <topology evidence="1">Single-pass type II membrane protein</topology>
    </subcellularLocation>
    <text evidence="1">Membrane-bound form in trans cisternae of Golgi.</text>
</comment>
<protein>
    <recommendedName>
        <fullName evidence="2">Galactoside alpha-(1,2)-fucosyltransferase 2</fullName>
    </recommendedName>
    <alternativeName>
        <fullName>Alpha(1,2)FT 2</fullName>
    </alternativeName>
    <alternativeName>
        <fullName>Fucosyltransferase 2</fullName>
    </alternativeName>
    <alternativeName>
        <fullName>GDP-L-fucose:beta-D-galactoside 2-alpha-L-fucosyltransferase 2</fullName>
    </alternativeName>
    <alternativeName>
        <fullName evidence="2">Type 1 galactoside alpha-(1,2)-fucosyltransferase FUT2</fullName>
        <ecNumber evidence="7 8">2.4.1.69</ecNumber>
    </alternativeName>
    <alternativeName>
        <fullName evidence="2">Type 2 galactoside alpha-(1,2)-fucosyltransferase FUT2</fullName>
        <ecNumber evidence="7 8">2.4.1.344</ecNumber>
    </alternativeName>
</protein>
<reference key="1">
    <citation type="journal article" date="1997" name="Mamm. Genome">
        <title>Two alpha(1,2) fucosyltransferase genes on porcine chromosome 6q11 are closely linked to the blood group inhibitor (S) and Escherichia coli F18 receptor (ECF18R) loci.</title>
        <authorList>
            <person name="Meijerink E."/>
            <person name="Fries R."/>
            <person name="Voegeli P."/>
            <person name="Masabanda J."/>
            <person name="Wigger G."/>
            <person name="Stricker C."/>
            <person name="Neuenschwander S."/>
            <person name="Bertschinger H.U."/>
            <person name="Stranzinger G."/>
        </authorList>
    </citation>
    <scope>NUCLEOTIDE SEQUENCE [GENOMIC DNA]</scope>
</reference>
<reference key="2">
    <citation type="submission" date="1997-09" db="EMBL/GenBank/DDBJ databases">
        <title>Molecular cloning and characterization of the pig secretor type alpha(1,2)fucosyltransferase.</title>
        <authorList>
            <person name="Cohney S."/>
            <person name="Mouhtouris E."/>
            <person name="McKenzie I.F.C."/>
            <person name="Sandrin M.S."/>
        </authorList>
    </citation>
    <scope>NUCLEOTIDE SEQUENCE</scope>
</reference>
<reference key="3">
    <citation type="journal article" date="2000" name="Immunogenetics">
        <title>A DNA polymorphism influencing alpha(1,2)fucosyltransferase activity of the pig FUT1 enzyme determines susceptibility of small intestinal epithelium to Escherichia coli F18 adhesion.</title>
        <authorList>
            <person name="Meijerink E."/>
            <person name="Neuenschwander S."/>
            <person name="Fries R."/>
            <person name="Dinter A."/>
            <person name="Bertschinger H.U."/>
            <person name="Stranzinger G."/>
            <person name="Vogeli P."/>
        </authorList>
    </citation>
    <scope>NUCLEOTIDE SEQUENCE [GENOMIC DNA / MRNA]</scope>
    <scope>FUNCTION</scope>
    <scope>CATALYTIC ACTIVITY</scope>
    <source>
        <tissue>Small intestine</tissue>
    </source>
</reference>
<reference key="4">
    <citation type="submission" date="1996-08" db="EMBL/GenBank/DDBJ databases">
        <authorList>
            <person name="Petit J.-M."/>
        </authorList>
    </citation>
    <scope>NUCLEOTIDE SEQUENCE OF 69-334</scope>
</reference>
<reference key="5">
    <citation type="journal article" date="1995" name="J. Biol. Chem.">
        <title>Porcine submaxillary gland GDP-L-fucose: beta-D-galactoside alpha-2-L-fucosyltransferase is likely a counterpart of the human Secretor gene-encoded blood group transferase.</title>
        <authorList>
            <person name="Thurin J."/>
            <person name="Blaszczyk-Thurin M."/>
        </authorList>
    </citation>
    <scope>PROTEIN SEQUENCE OF 69-80; 119-133 AND 316-334</scope>
    <scope>FUNCTION</scope>
    <scope>CATALYTIC ACTIVITY</scope>
    <source>
        <tissue>Submandibular gland</tissue>
    </source>
</reference>
<proteinExistence type="evidence at protein level"/>
<sequence>MLSMQASFFFPTGPFILFVFTASTIFHLQQRMVKIQPTWELQMVTQVTTESPSSPQLKGMWTINAIGRLGNQMGEYATLYALARMNGRPAFIPPEMHSTLAPIFRITLPVLHASTARRIPWQNYHLNDWMEERYRHIPGEYVRLTGYPCSWTFYHHLRTEILREFTLHNHVREEAQDFLRGLRVNGSRPSTYVGVHVRRGDYVHVMPNVWKGVVADRRYLEQALDWFRARYRSPVFVVSSNGMAWCRENINASRGDVVFAGNGIEGSPAKDFALLTQCNHTVMTIGTFGIWAAYLAGGETIYLANYTLPDSPFLKLFKPEAAFLPEWIGIEADLSPLLKH</sequence>
<evidence type="ECO:0000250" key="1"/>
<evidence type="ECO:0000250" key="2">
    <source>
        <dbReference type="UniProtKB" id="Q10981"/>
    </source>
</evidence>
<evidence type="ECO:0000250" key="3">
    <source>
        <dbReference type="UniProtKB" id="Q10984"/>
    </source>
</evidence>
<evidence type="ECO:0000250" key="4">
    <source>
        <dbReference type="UniProtKB" id="Q28113"/>
    </source>
</evidence>
<evidence type="ECO:0000250" key="5">
    <source>
        <dbReference type="UniProtKB" id="Q9JL27"/>
    </source>
</evidence>
<evidence type="ECO:0000255" key="6"/>
<evidence type="ECO:0000269" key="7">
    <source>
    </source>
</evidence>
<evidence type="ECO:0000269" key="8">
    <source>
    </source>
</evidence>
<evidence type="ECO:0000305" key="9"/>
<evidence type="ECO:0000305" key="10">
    <source>
    </source>
</evidence>
<evidence type="ECO:0000305" key="11">
    <source>
    </source>
</evidence>
<feature type="chain" id="PRO_0000149111" description="Galactoside alpha-(1,2)-fucosyltransferase 2">
    <location>
        <begin position="1"/>
        <end position="340"/>
    </location>
</feature>
<feature type="topological domain" description="Cytoplasmic" evidence="6">
    <location>
        <begin position="1"/>
        <end position="7"/>
    </location>
</feature>
<feature type="transmembrane region" description="Helical; Signal-anchor for type II membrane protein" evidence="6">
    <location>
        <begin position="8"/>
        <end position="28"/>
    </location>
</feature>
<feature type="topological domain" description="Lumenal" evidence="6">
    <location>
        <begin position="29"/>
        <end position="340"/>
    </location>
</feature>
<feature type="glycosylation site" description="N-linked (GlcNAc...) asparagine" evidence="6">
    <location>
        <position position="185"/>
    </location>
</feature>
<feature type="glycosylation site" description="N-linked (GlcNAc...) asparagine" evidence="6">
    <location>
        <position position="251"/>
    </location>
</feature>
<feature type="glycosylation site" description="N-linked (GlcNAc...) asparagine" evidence="6">
    <location>
        <position position="279"/>
    </location>
</feature>
<feature type="glycosylation site" description="N-linked (GlcNAc...) asparagine" evidence="6">
    <location>
        <position position="305"/>
    </location>
</feature>
<feature type="sequence conflict" description="In Ref. 4; CAA67932." evidence="9" ref="4">
    <original>R</original>
    <variation>H</variation>
    <location>
        <position position="158"/>
    </location>
</feature>
<gene>
    <name evidence="2" type="primary">FUT2</name>
</gene>
<name>FUT2_PIG</name>
<keyword id="KW-0903">Direct protein sequencing</keyword>
<keyword id="KW-0325">Glycoprotein</keyword>
<keyword id="KW-0328">Glycosyltransferase</keyword>
<keyword id="KW-0333">Golgi apparatus</keyword>
<keyword id="KW-0443">Lipid metabolism</keyword>
<keyword id="KW-0472">Membrane</keyword>
<keyword id="KW-1185">Reference proteome</keyword>
<keyword id="KW-0735">Signal-anchor</keyword>
<keyword id="KW-0808">Transferase</keyword>
<keyword id="KW-0812">Transmembrane</keyword>
<keyword id="KW-1133">Transmembrane helix</keyword>